<protein>
    <recommendedName>
        <fullName evidence="1">Malate dehydrogenase</fullName>
        <ecNumber evidence="1">1.1.1.37</ecNumber>
    </recommendedName>
</protein>
<organism>
    <name type="scientific">Deinococcus deserti (strain DSM 17065 / CIP 109153 / LMG 22923 / VCD115)</name>
    <dbReference type="NCBI Taxonomy" id="546414"/>
    <lineage>
        <taxon>Bacteria</taxon>
        <taxon>Thermotogati</taxon>
        <taxon>Deinococcota</taxon>
        <taxon>Deinococci</taxon>
        <taxon>Deinococcales</taxon>
        <taxon>Deinococcaceae</taxon>
        <taxon>Deinococcus</taxon>
    </lineage>
</organism>
<accession>C1CY73</accession>
<keyword id="KW-0520">NAD</keyword>
<keyword id="KW-0560">Oxidoreductase</keyword>
<keyword id="KW-1185">Reference proteome</keyword>
<keyword id="KW-0816">Tricarboxylic acid cycle</keyword>
<gene>
    <name evidence="1" type="primary">mdh</name>
    <name type="ordered locus">Deide_20240</name>
</gene>
<comment type="function">
    <text evidence="1">Catalyzes the reversible oxidation of malate to oxaloacetate.</text>
</comment>
<comment type="catalytic activity">
    <reaction evidence="1">
        <text>(S)-malate + NAD(+) = oxaloacetate + NADH + H(+)</text>
        <dbReference type="Rhea" id="RHEA:21432"/>
        <dbReference type="ChEBI" id="CHEBI:15378"/>
        <dbReference type="ChEBI" id="CHEBI:15589"/>
        <dbReference type="ChEBI" id="CHEBI:16452"/>
        <dbReference type="ChEBI" id="CHEBI:57540"/>
        <dbReference type="ChEBI" id="CHEBI:57945"/>
        <dbReference type="EC" id="1.1.1.37"/>
    </reaction>
</comment>
<comment type="similarity">
    <text evidence="1">Belongs to the LDH/MDH superfamily. MDH type 2 family.</text>
</comment>
<name>MDH_DEIDV</name>
<proteinExistence type="inferred from homology"/>
<feature type="chain" id="PRO_1000215355" description="Malate dehydrogenase">
    <location>
        <begin position="1"/>
        <end position="330"/>
    </location>
</feature>
<feature type="active site" description="Proton acceptor" evidence="1">
    <location>
        <position position="189"/>
    </location>
</feature>
<feature type="binding site" evidence="1">
    <location>
        <begin position="13"/>
        <end position="19"/>
    </location>
    <ligand>
        <name>NAD(+)</name>
        <dbReference type="ChEBI" id="CHEBI:57540"/>
    </ligand>
</feature>
<feature type="binding site" evidence="1">
    <location>
        <position position="94"/>
    </location>
    <ligand>
        <name>substrate</name>
    </ligand>
</feature>
<feature type="binding site" evidence="1">
    <location>
        <position position="100"/>
    </location>
    <ligand>
        <name>substrate</name>
    </ligand>
</feature>
<feature type="binding site" evidence="1">
    <location>
        <position position="107"/>
    </location>
    <ligand>
        <name>NAD(+)</name>
        <dbReference type="ChEBI" id="CHEBI:57540"/>
    </ligand>
</feature>
<feature type="binding site" evidence="1">
    <location>
        <position position="114"/>
    </location>
    <ligand>
        <name>NAD(+)</name>
        <dbReference type="ChEBI" id="CHEBI:57540"/>
    </ligand>
</feature>
<feature type="binding site" evidence="1">
    <location>
        <begin position="131"/>
        <end position="133"/>
    </location>
    <ligand>
        <name>NAD(+)</name>
        <dbReference type="ChEBI" id="CHEBI:57540"/>
    </ligand>
</feature>
<feature type="binding site" evidence="1">
    <location>
        <position position="133"/>
    </location>
    <ligand>
        <name>substrate</name>
    </ligand>
</feature>
<feature type="binding site" evidence="1">
    <location>
        <position position="164"/>
    </location>
    <ligand>
        <name>substrate</name>
    </ligand>
</feature>
<evidence type="ECO:0000255" key="1">
    <source>
        <dbReference type="HAMAP-Rule" id="MF_01517"/>
    </source>
</evidence>
<sequence>MTNKQPVRVAVTGAAGQIGYSLLFRIAAGDMLGKDQPVILQLLEITPALKALQGVVMELRDGAYPLLADVVTSDDPLVAFKDADYALLVGAMPRKAGMERGDLLGANGGIFKPQGQALNQVASRDVKVLVVGNPANTNALIAQQNAPDLDPRQFTAMVRLDHNRAISQLAEKTGQPVSAIKNITIWGNHSSTQYPDLSQATVGGRPALDLVDRTWYEQEYIPTVAKRGAAIIEARGASSAASAASAAIDHMRDWALGTSEGEWVSMGIPSDGSYGVPEGLIYGFPVTVKDGKYQIVQGLEISEFSRGKMDATARELEEERDEIRKLGLIS</sequence>
<dbReference type="EC" id="1.1.1.37" evidence="1"/>
<dbReference type="EMBL" id="CP001114">
    <property type="protein sequence ID" value="ACO47029.1"/>
    <property type="molecule type" value="Genomic_DNA"/>
</dbReference>
<dbReference type="RefSeq" id="WP_012694150.1">
    <property type="nucleotide sequence ID" value="NC_012526.1"/>
</dbReference>
<dbReference type="SMR" id="C1CY73"/>
<dbReference type="STRING" id="546414.Deide_20240"/>
<dbReference type="PaxDb" id="546414-Deide_20240"/>
<dbReference type="KEGG" id="ddr:Deide_20240"/>
<dbReference type="eggNOG" id="COG0039">
    <property type="taxonomic scope" value="Bacteria"/>
</dbReference>
<dbReference type="HOGENOM" id="CLU_040727_2_0_0"/>
<dbReference type="OrthoDB" id="9802969at2"/>
<dbReference type="Proteomes" id="UP000002208">
    <property type="component" value="Chromosome"/>
</dbReference>
<dbReference type="GO" id="GO:0030060">
    <property type="term" value="F:L-malate dehydrogenase (NAD+) activity"/>
    <property type="evidence" value="ECO:0007669"/>
    <property type="project" value="UniProtKB-UniRule"/>
</dbReference>
<dbReference type="GO" id="GO:0006108">
    <property type="term" value="P:malate metabolic process"/>
    <property type="evidence" value="ECO:0007669"/>
    <property type="project" value="InterPro"/>
</dbReference>
<dbReference type="GO" id="GO:0006099">
    <property type="term" value="P:tricarboxylic acid cycle"/>
    <property type="evidence" value="ECO:0007669"/>
    <property type="project" value="UniProtKB-UniRule"/>
</dbReference>
<dbReference type="CDD" id="cd01338">
    <property type="entry name" value="MDH_chloroplast-like"/>
    <property type="match status" value="1"/>
</dbReference>
<dbReference type="FunFam" id="3.40.50.720:FF:000010">
    <property type="entry name" value="Malate dehydrogenase"/>
    <property type="match status" value="1"/>
</dbReference>
<dbReference type="FunFam" id="3.90.110.10:FF:000002">
    <property type="entry name" value="Malate dehydrogenase"/>
    <property type="match status" value="1"/>
</dbReference>
<dbReference type="Gene3D" id="3.90.110.10">
    <property type="entry name" value="Lactate dehydrogenase/glycoside hydrolase, family 4, C-terminal"/>
    <property type="match status" value="1"/>
</dbReference>
<dbReference type="Gene3D" id="3.40.50.720">
    <property type="entry name" value="NAD(P)-binding Rossmann-like Domain"/>
    <property type="match status" value="1"/>
</dbReference>
<dbReference type="HAMAP" id="MF_01517">
    <property type="entry name" value="Malate_dehydrog_2"/>
    <property type="match status" value="1"/>
</dbReference>
<dbReference type="InterPro" id="IPR001557">
    <property type="entry name" value="L-lactate/malate_DH"/>
</dbReference>
<dbReference type="InterPro" id="IPR022383">
    <property type="entry name" value="Lactate/malate_DH_C"/>
</dbReference>
<dbReference type="InterPro" id="IPR001236">
    <property type="entry name" value="Lactate/malate_DH_N"/>
</dbReference>
<dbReference type="InterPro" id="IPR015955">
    <property type="entry name" value="Lactate_DH/Glyco_Ohase_4_C"/>
</dbReference>
<dbReference type="InterPro" id="IPR010945">
    <property type="entry name" value="Malate_DH_type2"/>
</dbReference>
<dbReference type="InterPro" id="IPR036291">
    <property type="entry name" value="NAD(P)-bd_dom_sf"/>
</dbReference>
<dbReference type="NCBIfam" id="TIGR01759">
    <property type="entry name" value="MalateDH-SF1"/>
    <property type="match status" value="1"/>
</dbReference>
<dbReference type="NCBIfam" id="NF003916">
    <property type="entry name" value="PRK05442.1"/>
    <property type="match status" value="1"/>
</dbReference>
<dbReference type="PANTHER" id="PTHR23382">
    <property type="entry name" value="MALATE DEHYDROGENASE"/>
    <property type="match status" value="1"/>
</dbReference>
<dbReference type="Pfam" id="PF02866">
    <property type="entry name" value="Ldh_1_C"/>
    <property type="match status" value="1"/>
</dbReference>
<dbReference type="Pfam" id="PF00056">
    <property type="entry name" value="Ldh_1_N"/>
    <property type="match status" value="1"/>
</dbReference>
<dbReference type="PIRSF" id="PIRSF000102">
    <property type="entry name" value="Lac_mal_DH"/>
    <property type="match status" value="1"/>
</dbReference>
<dbReference type="SUPFAM" id="SSF56327">
    <property type="entry name" value="LDH C-terminal domain-like"/>
    <property type="match status" value="1"/>
</dbReference>
<dbReference type="SUPFAM" id="SSF51735">
    <property type="entry name" value="NAD(P)-binding Rossmann-fold domains"/>
    <property type="match status" value="1"/>
</dbReference>
<reference key="1">
    <citation type="journal article" date="2009" name="PLoS Genet.">
        <title>Alliance of proteomics and genomics to unravel the specificities of Sahara bacterium Deinococcus deserti.</title>
        <authorList>
            <person name="de Groot A."/>
            <person name="Dulermo R."/>
            <person name="Ortet P."/>
            <person name="Blanchard L."/>
            <person name="Guerin P."/>
            <person name="Fernandez B."/>
            <person name="Vacherie B."/>
            <person name="Dossat C."/>
            <person name="Jolivet E."/>
            <person name="Siguier P."/>
            <person name="Chandler M."/>
            <person name="Barakat M."/>
            <person name="Dedieu A."/>
            <person name="Barbe V."/>
            <person name="Heulin T."/>
            <person name="Sommer S."/>
            <person name="Achouak W."/>
            <person name="Armengaud J."/>
        </authorList>
    </citation>
    <scope>NUCLEOTIDE SEQUENCE [LARGE SCALE GENOMIC DNA]</scope>
    <source>
        <strain>DSM 17065 / CIP 109153 / LMG 22923 / VCD115</strain>
    </source>
</reference>